<keyword id="KW-0175">Coiled coil</keyword>
<keyword id="KW-0507">mRNA processing</keyword>
<keyword id="KW-0508">mRNA splicing</keyword>
<keyword id="KW-0539">Nucleus</keyword>
<keyword id="KW-1185">Reference proteome</keyword>
<sequence length="360" mass="42035">MDAIRAQLDEFLGKDRNLLPKDRIKVENDFNDPDICKFFLCGLCPHELFTNANIRDLGPCSKLHDENCVKQYQNNKDKDKYDYEREWVRVIEGLISDNDKKIKRNKERLLQNPNGDANHHGGPIQQQSISQLDDEEGGLLPDKEQNSKITELDLKIQELLKKAEELGEEGQITEAQALMTEADELKNQKVELEKIEQEKNENKRMSVCEICGALLFVGDKEKRSISHLEGKKHIGFQKIREVMEEYYKSGRRANLGRTDFYNAPPPPRDSYRDDRRSSSSSYHDIDGRRDHRYGGGSRDYGGSDRRGGGNYNNGRGSSRDNYNNINNSRDYRNDHGKDYDRKRERDYYNDDDRRKRDRNY</sequence>
<organism>
    <name type="scientific">Dictyostelium discoideum</name>
    <name type="common">Social amoeba</name>
    <dbReference type="NCBI Taxonomy" id="44689"/>
    <lineage>
        <taxon>Eukaryota</taxon>
        <taxon>Amoebozoa</taxon>
        <taxon>Evosea</taxon>
        <taxon>Eumycetozoa</taxon>
        <taxon>Dictyostelia</taxon>
        <taxon>Dictyosteliales</taxon>
        <taxon>Dictyosteliaceae</taxon>
        <taxon>Dictyostelium</taxon>
    </lineage>
</organism>
<dbReference type="EMBL" id="AAFI02000024">
    <property type="protein sequence ID" value="EAL68001.1"/>
    <property type="molecule type" value="Genomic_DNA"/>
</dbReference>
<dbReference type="RefSeq" id="XP_641972.1">
    <property type="nucleotide sequence ID" value="XM_636880.1"/>
</dbReference>
<dbReference type="SMR" id="Q54XQ8"/>
<dbReference type="FunCoup" id="Q54XQ8">
    <property type="interactions" value="922"/>
</dbReference>
<dbReference type="STRING" id="44689.Q54XQ8"/>
<dbReference type="PaxDb" id="44689-DDB0233514"/>
<dbReference type="EnsemblProtists" id="EAL68001">
    <property type="protein sequence ID" value="EAL68001"/>
    <property type="gene ID" value="DDB_G0278799"/>
</dbReference>
<dbReference type="GeneID" id="8621704"/>
<dbReference type="KEGG" id="ddi:DDB_G0278799"/>
<dbReference type="dictyBase" id="DDB_G0278799">
    <property type="gene designation" value="crop"/>
</dbReference>
<dbReference type="VEuPathDB" id="AmoebaDB:DDB_G0278799"/>
<dbReference type="eggNOG" id="KOG0796">
    <property type="taxonomic scope" value="Eukaryota"/>
</dbReference>
<dbReference type="HOGENOM" id="CLU_030397_0_0_1"/>
<dbReference type="InParanoid" id="Q54XQ8"/>
<dbReference type="OMA" id="PCTRIHD"/>
<dbReference type="PhylomeDB" id="Q54XQ8"/>
<dbReference type="PRO" id="PR:Q54XQ8"/>
<dbReference type="Proteomes" id="UP000002195">
    <property type="component" value="Chromosome 3"/>
</dbReference>
<dbReference type="GO" id="GO:0005634">
    <property type="term" value="C:nucleus"/>
    <property type="evidence" value="ECO:0000250"/>
    <property type="project" value="UniProtKB"/>
</dbReference>
<dbReference type="GO" id="GO:0005685">
    <property type="term" value="C:U1 snRNP"/>
    <property type="evidence" value="ECO:0000250"/>
    <property type="project" value="dictyBase"/>
</dbReference>
<dbReference type="GO" id="GO:0071004">
    <property type="term" value="C:U2-type prespliceosome"/>
    <property type="evidence" value="ECO:0000318"/>
    <property type="project" value="GO_Central"/>
</dbReference>
<dbReference type="GO" id="GO:0003729">
    <property type="term" value="F:mRNA binding"/>
    <property type="evidence" value="ECO:0000250"/>
    <property type="project" value="UniProtKB"/>
</dbReference>
<dbReference type="GO" id="GO:0006376">
    <property type="term" value="P:mRNA splice site recognition"/>
    <property type="evidence" value="ECO:0000250"/>
    <property type="project" value="dictyBase"/>
</dbReference>
<dbReference type="GO" id="GO:0008380">
    <property type="term" value="P:RNA splicing"/>
    <property type="evidence" value="ECO:0000250"/>
    <property type="project" value="UniProtKB"/>
</dbReference>
<dbReference type="InterPro" id="IPR004882">
    <property type="entry name" value="Luc7-rel"/>
</dbReference>
<dbReference type="PANTHER" id="PTHR12375">
    <property type="entry name" value="RNA-BINDING PROTEIN LUC7-RELATED"/>
    <property type="match status" value="1"/>
</dbReference>
<dbReference type="Pfam" id="PF03194">
    <property type="entry name" value="LUC7"/>
    <property type="match status" value="1"/>
</dbReference>
<gene>
    <name type="primary">crop</name>
    <name type="ORF">DDB_G0278799</name>
</gene>
<accession>Q54XQ8</accession>
<comment type="function">
    <text evidence="1">May play a role in RNA splicing.</text>
</comment>
<comment type="subcellular location">
    <subcellularLocation>
        <location evidence="1">Nucleus</location>
    </subcellularLocation>
</comment>
<comment type="similarity">
    <text evidence="4">Belongs to the Luc7 family.</text>
</comment>
<reference key="1">
    <citation type="journal article" date="2005" name="Nature">
        <title>The genome of the social amoeba Dictyostelium discoideum.</title>
        <authorList>
            <person name="Eichinger L."/>
            <person name="Pachebat J.A."/>
            <person name="Gloeckner G."/>
            <person name="Rajandream M.A."/>
            <person name="Sucgang R."/>
            <person name="Berriman M."/>
            <person name="Song J."/>
            <person name="Olsen R."/>
            <person name="Szafranski K."/>
            <person name="Xu Q."/>
            <person name="Tunggal B."/>
            <person name="Kummerfeld S."/>
            <person name="Madera M."/>
            <person name="Konfortov B.A."/>
            <person name="Rivero F."/>
            <person name="Bankier A.T."/>
            <person name="Lehmann R."/>
            <person name="Hamlin N."/>
            <person name="Davies R."/>
            <person name="Gaudet P."/>
            <person name="Fey P."/>
            <person name="Pilcher K."/>
            <person name="Chen G."/>
            <person name="Saunders D."/>
            <person name="Sodergren E.J."/>
            <person name="Davis P."/>
            <person name="Kerhornou A."/>
            <person name="Nie X."/>
            <person name="Hall N."/>
            <person name="Anjard C."/>
            <person name="Hemphill L."/>
            <person name="Bason N."/>
            <person name="Farbrother P."/>
            <person name="Desany B."/>
            <person name="Just E."/>
            <person name="Morio T."/>
            <person name="Rost R."/>
            <person name="Churcher C.M."/>
            <person name="Cooper J."/>
            <person name="Haydock S."/>
            <person name="van Driessche N."/>
            <person name="Cronin A."/>
            <person name="Goodhead I."/>
            <person name="Muzny D.M."/>
            <person name="Mourier T."/>
            <person name="Pain A."/>
            <person name="Lu M."/>
            <person name="Harper D."/>
            <person name="Lindsay R."/>
            <person name="Hauser H."/>
            <person name="James K.D."/>
            <person name="Quiles M."/>
            <person name="Madan Babu M."/>
            <person name="Saito T."/>
            <person name="Buchrieser C."/>
            <person name="Wardroper A."/>
            <person name="Felder M."/>
            <person name="Thangavelu M."/>
            <person name="Johnson D."/>
            <person name="Knights A."/>
            <person name="Loulseged H."/>
            <person name="Mungall K.L."/>
            <person name="Oliver K."/>
            <person name="Price C."/>
            <person name="Quail M.A."/>
            <person name="Urushihara H."/>
            <person name="Hernandez J."/>
            <person name="Rabbinowitsch E."/>
            <person name="Steffen D."/>
            <person name="Sanders M."/>
            <person name="Ma J."/>
            <person name="Kohara Y."/>
            <person name="Sharp S."/>
            <person name="Simmonds M.N."/>
            <person name="Spiegler S."/>
            <person name="Tivey A."/>
            <person name="Sugano S."/>
            <person name="White B."/>
            <person name="Walker D."/>
            <person name="Woodward J.R."/>
            <person name="Winckler T."/>
            <person name="Tanaka Y."/>
            <person name="Shaulsky G."/>
            <person name="Schleicher M."/>
            <person name="Weinstock G.M."/>
            <person name="Rosenthal A."/>
            <person name="Cox E.C."/>
            <person name="Chisholm R.L."/>
            <person name="Gibbs R.A."/>
            <person name="Loomis W.F."/>
            <person name="Platzer M."/>
            <person name="Kay R.R."/>
            <person name="Williams J.G."/>
            <person name="Dear P.H."/>
            <person name="Noegel A.A."/>
            <person name="Barrell B.G."/>
            <person name="Kuspa A."/>
        </authorList>
    </citation>
    <scope>NUCLEOTIDE SEQUENCE [LARGE SCALE GENOMIC DNA]</scope>
    <source>
        <strain>AX4</strain>
    </source>
</reference>
<feature type="chain" id="PRO_0000328181" description="Luc7-like protein">
    <location>
        <begin position="1"/>
        <end position="360"/>
    </location>
</feature>
<feature type="region of interest" description="Disordered" evidence="3">
    <location>
        <begin position="255"/>
        <end position="360"/>
    </location>
</feature>
<feature type="coiled-coil region" evidence="2">
    <location>
        <begin position="143"/>
        <end position="206"/>
    </location>
</feature>
<feature type="compositionally biased region" description="Basic and acidic residues" evidence="3">
    <location>
        <begin position="269"/>
        <end position="293"/>
    </location>
</feature>
<feature type="compositionally biased region" description="Low complexity" evidence="3">
    <location>
        <begin position="312"/>
        <end position="321"/>
    </location>
</feature>
<feature type="compositionally biased region" description="Basic and acidic residues" evidence="3">
    <location>
        <begin position="329"/>
        <end position="360"/>
    </location>
</feature>
<proteinExistence type="inferred from homology"/>
<protein>
    <recommendedName>
        <fullName>Luc7-like protein</fullName>
    </recommendedName>
    <alternativeName>
        <fullName>Protein CROP homolog</fullName>
    </alternativeName>
</protein>
<name>LUC7L_DICDI</name>
<evidence type="ECO:0000250" key="1"/>
<evidence type="ECO:0000255" key="2"/>
<evidence type="ECO:0000256" key="3">
    <source>
        <dbReference type="SAM" id="MobiDB-lite"/>
    </source>
</evidence>
<evidence type="ECO:0000305" key="4"/>